<reference key="1">
    <citation type="journal article" date="1994" name="Nature">
        <title>2.2 Mb of contiguous nucleotide sequence from chromosome III of C. elegans.</title>
        <authorList>
            <person name="Wilson R."/>
            <person name="Ainscough R."/>
            <person name="Anderson K."/>
            <person name="Baynes C."/>
            <person name="Berks M."/>
            <person name="Bonfield J."/>
            <person name="Burton J."/>
            <person name="Connell M."/>
            <person name="Copsey T."/>
            <person name="Cooper J."/>
            <person name="Coulson A."/>
            <person name="Craxton M."/>
            <person name="Dear S."/>
            <person name="Du Z."/>
            <person name="Durbin R."/>
            <person name="Favello A."/>
            <person name="Fraser A."/>
            <person name="Fulton L."/>
            <person name="Gardner A."/>
            <person name="Green P."/>
            <person name="Hawkins T."/>
            <person name="Hillier L."/>
            <person name="Jier M."/>
            <person name="Johnston L."/>
            <person name="Jones M."/>
            <person name="Kershaw J."/>
            <person name="Kirsten J."/>
            <person name="Laisster N."/>
            <person name="Latreille P."/>
            <person name="Lightning J."/>
            <person name="Lloyd C."/>
            <person name="Mortimore B."/>
            <person name="O'Callaghan M."/>
            <person name="Parsons J."/>
            <person name="Percy C."/>
            <person name="Rifken L."/>
            <person name="Roopra A."/>
            <person name="Saunders D."/>
            <person name="Shownkeen R."/>
            <person name="Sims M."/>
            <person name="Smaldon N."/>
            <person name="Smith A."/>
            <person name="Smith M."/>
            <person name="Sonnhammer E."/>
            <person name="Staden R."/>
            <person name="Sulston J."/>
            <person name="Thierry-Mieg J."/>
            <person name="Thomas K."/>
            <person name="Vaudin M."/>
            <person name="Vaughan K."/>
            <person name="Waterston R."/>
            <person name="Watson A."/>
            <person name="Weinstock L."/>
            <person name="Wilkinson-Sproat J."/>
            <person name="Wohldman P."/>
        </authorList>
    </citation>
    <scope>NUCLEOTIDE SEQUENCE [LARGE SCALE GENOMIC DNA]</scope>
    <source>
        <strain>Bristol N2</strain>
    </source>
</reference>
<reference key="2">
    <citation type="journal article" date="1998" name="Science">
        <title>Genome sequence of the nematode C. elegans: a platform for investigating biology.</title>
        <authorList>
            <consortium name="The C. elegans sequencing consortium"/>
        </authorList>
    </citation>
    <scope>NUCLEOTIDE SEQUENCE [LARGE SCALE GENOMIC DNA]</scope>
    <source>
        <strain>Bristol N2</strain>
    </source>
</reference>
<keyword id="KW-0175">Coiled coil</keyword>
<keyword id="KW-1185">Reference proteome</keyword>
<gene>
    <name type="primary">cids-1</name>
    <name type="ORF">C02F5.4</name>
</gene>
<dbReference type="EMBL" id="FO080288">
    <property type="protein sequence ID" value="CCD62628.1"/>
    <property type="molecule type" value="Genomic_DNA"/>
</dbReference>
<dbReference type="PIR" id="S44606">
    <property type="entry name" value="S44606"/>
</dbReference>
<dbReference type="RefSeq" id="NP_498807.2">
    <property type="nucleotide sequence ID" value="NM_066406.7"/>
</dbReference>
<dbReference type="SMR" id="P34281"/>
<dbReference type="BioGRID" id="41366">
    <property type="interactions" value="7"/>
</dbReference>
<dbReference type="FunCoup" id="P34281">
    <property type="interactions" value="3127"/>
</dbReference>
<dbReference type="IntAct" id="P34281">
    <property type="interactions" value="2"/>
</dbReference>
<dbReference type="STRING" id="6239.C02F5.4.1"/>
<dbReference type="PaxDb" id="6239-C02F5.4"/>
<dbReference type="PeptideAtlas" id="P34281"/>
<dbReference type="EnsemblMetazoa" id="C02F5.4.1">
    <property type="protein sequence ID" value="C02F5.4.1"/>
    <property type="gene ID" value="WBGene00015347"/>
</dbReference>
<dbReference type="GeneID" id="176162"/>
<dbReference type="KEGG" id="cel:CELE_C02F5.4"/>
<dbReference type="AGR" id="WB:WBGene00015347"/>
<dbReference type="CTD" id="176162"/>
<dbReference type="WormBase" id="C02F5.4">
    <property type="protein sequence ID" value="CE38771"/>
    <property type="gene ID" value="WBGene00015347"/>
    <property type="gene designation" value="cids-1"/>
</dbReference>
<dbReference type="eggNOG" id="KOG2669">
    <property type="taxonomic scope" value="Eukaryota"/>
</dbReference>
<dbReference type="GeneTree" id="ENSGT00950000183094"/>
<dbReference type="HOGENOM" id="CLU_842627_0_0_1"/>
<dbReference type="InParanoid" id="P34281"/>
<dbReference type="OMA" id="MSIEHHE"/>
<dbReference type="OrthoDB" id="1708588at2759"/>
<dbReference type="PhylomeDB" id="P34281"/>
<dbReference type="Reactome" id="R-CEL-6807505">
    <property type="pathway name" value="RNA polymerase II transcribes snRNA genes"/>
</dbReference>
<dbReference type="PRO" id="PR:P34281"/>
<dbReference type="Proteomes" id="UP000001940">
    <property type="component" value="Chromosome III"/>
</dbReference>
<dbReference type="Bgee" id="WBGene00015347">
    <property type="expression patterns" value="Expressed in germ line (C elegans) and 4 other cell types or tissues"/>
</dbReference>
<dbReference type="GO" id="GO:0000993">
    <property type="term" value="F:RNA polymerase II complex binding"/>
    <property type="evidence" value="ECO:0000318"/>
    <property type="project" value="GO_Central"/>
</dbReference>
<dbReference type="GO" id="GO:0031124">
    <property type="term" value="P:mRNA 3'-end processing"/>
    <property type="evidence" value="ECO:0000315"/>
    <property type="project" value="WormBase"/>
</dbReference>
<dbReference type="Gene3D" id="1.25.40.90">
    <property type="match status" value="1"/>
</dbReference>
<dbReference type="Gene3D" id="6.10.250.2560">
    <property type="match status" value="1"/>
</dbReference>
<dbReference type="InterPro" id="IPR006569">
    <property type="entry name" value="CID_dom"/>
</dbReference>
<dbReference type="InterPro" id="IPR008942">
    <property type="entry name" value="ENTH_VHS"/>
</dbReference>
<dbReference type="InterPro" id="IPR032337">
    <property type="entry name" value="RPRD1A/B_C"/>
</dbReference>
<dbReference type="PANTHER" id="PTHR12460:SF0">
    <property type="entry name" value="CID DOMAIN-CONTAINING PROTEIN-RELATED"/>
    <property type="match status" value="1"/>
</dbReference>
<dbReference type="PANTHER" id="PTHR12460">
    <property type="entry name" value="CYCLIN-DEPENDENT KINASE INHIBITOR-RELATED PROTEIN"/>
    <property type="match status" value="1"/>
</dbReference>
<dbReference type="Pfam" id="PF04818">
    <property type="entry name" value="CID"/>
    <property type="match status" value="1"/>
</dbReference>
<dbReference type="Pfam" id="PF16566">
    <property type="entry name" value="CREPT"/>
    <property type="match status" value="1"/>
</dbReference>
<dbReference type="SMART" id="SM00582">
    <property type="entry name" value="RPR"/>
    <property type="match status" value="1"/>
</dbReference>
<dbReference type="SUPFAM" id="SSF48464">
    <property type="entry name" value="ENTH/VHS domain"/>
    <property type="match status" value="1"/>
</dbReference>
<dbReference type="PROSITE" id="PS51391">
    <property type="entry name" value="CID"/>
    <property type="match status" value="1"/>
</dbReference>
<evidence type="ECO:0000255" key="1"/>
<evidence type="ECO:0000255" key="2">
    <source>
        <dbReference type="PROSITE-ProRule" id="PRU00724"/>
    </source>
</evidence>
<name>CIDS1_CAEEL</name>
<feature type="chain" id="PRO_0000065109" description="CID domain-containing protein 1">
    <location>
        <begin position="1"/>
        <end position="315"/>
    </location>
</feature>
<feature type="domain" description="CID" evidence="2">
    <location>
        <begin position="1"/>
        <end position="135"/>
    </location>
</feature>
<feature type="coiled-coil region" evidence="1">
    <location>
        <begin position="227"/>
        <end position="273"/>
    </location>
</feature>
<organism>
    <name type="scientific">Caenorhabditis elegans</name>
    <dbReference type="NCBI Taxonomy" id="6239"/>
    <lineage>
        <taxon>Eukaryota</taxon>
        <taxon>Metazoa</taxon>
        <taxon>Ecdysozoa</taxon>
        <taxon>Nematoda</taxon>
        <taxon>Chromadorea</taxon>
        <taxon>Rhabditida</taxon>
        <taxon>Rhabditina</taxon>
        <taxon>Rhabditomorpha</taxon>
        <taxon>Rhabditoidea</taxon>
        <taxon>Rhabditidae</taxon>
        <taxon>Peloderinae</taxon>
        <taxon>Caenorhabditis</taxon>
    </lineage>
</organism>
<sequence length="315" mass="36374">MADFTEQTLRQKLTNLSNHPSSIQTTSAWLLQNHSNRELIIRVWLKTVKKETHGSKIVNLLYVANDVSQNARKTCPQFKDEFFPAIESSFRHAIELKNAKEVEHAIGKLINVWKDRQIFTPSQCKRLHEVHQQVKLSGSFPTPAVANKEHGKVAQPSQFVVEEAKKNAQDVLLSLKRLQNPPSTEREIRTELSKYPDNISCPEKLQSVRSSQEAQSLLVQNEEALPMLEEYVKRLKNETNERETLESNLNMLIENVRMSIEHHEKLCREVKRREDRIKADLLEVEKTFESLPDLAAEMPNAPLPTLEALFEKRKK</sequence>
<accession>P34281</accession>
<proteinExistence type="predicted"/>
<protein>
    <recommendedName>
        <fullName>CID domain-containing protein 1</fullName>
    </recommendedName>
</protein>